<proteinExistence type="evidence at transcript level"/>
<name>V2R_PIG</name>
<feature type="chain" id="PRO_0000070210" description="Vasopressin V2 receptor">
    <location>
        <begin position="1"/>
        <end position="370"/>
    </location>
</feature>
<feature type="topological domain" description="Extracellular" evidence="3">
    <location>
        <begin position="1"/>
        <end position="37"/>
    </location>
</feature>
<feature type="transmembrane region" description="Helical; Name=1" evidence="3">
    <location>
        <begin position="38"/>
        <end position="62"/>
    </location>
</feature>
<feature type="topological domain" description="Cytoplasmic" evidence="3">
    <location>
        <begin position="63"/>
        <end position="76"/>
    </location>
</feature>
<feature type="transmembrane region" description="Helical; Name=2" evidence="3">
    <location>
        <begin position="77"/>
        <end position="97"/>
    </location>
</feature>
<feature type="topological domain" description="Extracellular" evidence="3">
    <location>
        <begin position="98"/>
        <end position="112"/>
    </location>
</feature>
<feature type="transmembrane region" description="Helical; Name=3" evidence="3">
    <location>
        <begin position="113"/>
        <end position="134"/>
    </location>
</feature>
<feature type="topological domain" description="Cytoplasmic" evidence="3">
    <location>
        <begin position="135"/>
        <end position="158"/>
    </location>
</feature>
<feature type="transmembrane region" description="Helical; Name=4" evidence="3">
    <location>
        <begin position="159"/>
        <end position="179"/>
    </location>
</feature>
<feature type="topological domain" description="Extracellular" evidence="3">
    <location>
        <begin position="180"/>
        <end position="199"/>
    </location>
</feature>
<feature type="transmembrane region" description="Helical; Name=5" evidence="3">
    <location>
        <begin position="200"/>
        <end position="219"/>
    </location>
</feature>
<feature type="topological domain" description="Cytoplasmic" evidence="3">
    <location>
        <begin position="220"/>
        <end position="270"/>
    </location>
</feature>
<feature type="transmembrane region" description="Helical; Name=6" evidence="3">
    <location>
        <begin position="271"/>
        <end position="292"/>
    </location>
</feature>
<feature type="topological domain" description="Extracellular" evidence="3">
    <location>
        <begin position="293"/>
        <end position="307"/>
    </location>
</feature>
<feature type="transmembrane region" description="Helical; Name=7" evidence="3">
    <location>
        <begin position="308"/>
        <end position="327"/>
    </location>
</feature>
<feature type="topological domain" description="Cytoplasmic" evidence="3">
    <location>
        <begin position="328"/>
        <end position="370"/>
    </location>
</feature>
<feature type="region of interest" description="Disordered" evidence="5">
    <location>
        <begin position="1"/>
        <end position="28"/>
    </location>
</feature>
<feature type="region of interest" description="Disordered" evidence="5">
    <location>
        <begin position="347"/>
        <end position="370"/>
    </location>
</feature>
<feature type="compositionally biased region" description="Polar residues" evidence="5">
    <location>
        <begin position="356"/>
        <end position="370"/>
    </location>
</feature>
<feature type="lipid moiety-binding region" description="S-palmitoyl cysteine" evidence="1">
    <location>
        <position position="340"/>
    </location>
</feature>
<feature type="lipid moiety-binding region" description="S-palmitoyl cysteine" evidence="1">
    <location>
        <position position="341"/>
    </location>
</feature>
<feature type="glycosylation site" description="N-linked (GlcNAc...) asparagine" evidence="3">
    <location>
        <position position="21"/>
    </location>
</feature>
<reference key="1">
    <citation type="journal article" date="1993" name="Eur. J. Biochem.">
        <title>Molecular cloning and functional characterization of V2 [8-lysine] vasopressin and oxytocin receptors from a pig kidney cell line.</title>
        <authorList>
            <person name="Gorbulev V."/>
            <person name="Buechner H."/>
            <person name="Akhundova A."/>
            <person name="Fahrenholz F."/>
        </authorList>
    </citation>
    <scope>NUCLEOTIDE SEQUENCE [MRNA]</scope>
    <scope>FUNCTION</scope>
    <scope>SUBCELLULAR LOCATION</scope>
    <source>
        <tissue>Kidney</tissue>
    </source>
</reference>
<organism>
    <name type="scientific">Sus scrofa</name>
    <name type="common">Pig</name>
    <dbReference type="NCBI Taxonomy" id="9823"/>
    <lineage>
        <taxon>Eukaryota</taxon>
        <taxon>Metazoa</taxon>
        <taxon>Chordata</taxon>
        <taxon>Craniata</taxon>
        <taxon>Vertebrata</taxon>
        <taxon>Euteleostomi</taxon>
        <taxon>Mammalia</taxon>
        <taxon>Eutheria</taxon>
        <taxon>Laurasiatheria</taxon>
        <taxon>Artiodactyla</taxon>
        <taxon>Suina</taxon>
        <taxon>Suidae</taxon>
        <taxon>Sus</taxon>
    </lineage>
</organism>
<keyword id="KW-1003">Cell membrane</keyword>
<keyword id="KW-0297">G-protein coupled receptor</keyword>
<keyword id="KW-0325">Glycoprotein</keyword>
<keyword id="KW-0449">Lipoprotein</keyword>
<keyword id="KW-0472">Membrane</keyword>
<keyword id="KW-0564">Palmitate</keyword>
<keyword id="KW-0675">Receptor</keyword>
<keyword id="KW-1185">Reference proteome</keyword>
<keyword id="KW-0807">Transducer</keyword>
<keyword id="KW-0812">Transmembrane</keyword>
<keyword id="KW-1133">Transmembrane helix</keyword>
<evidence type="ECO:0000250" key="1"/>
<evidence type="ECO:0000250" key="2">
    <source>
        <dbReference type="UniProtKB" id="P30518"/>
    </source>
</evidence>
<evidence type="ECO:0000255" key="3"/>
<evidence type="ECO:0000255" key="4">
    <source>
        <dbReference type="PROSITE-ProRule" id="PRU00521"/>
    </source>
</evidence>
<evidence type="ECO:0000256" key="5">
    <source>
        <dbReference type="SAM" id="MobiDB-lite"/>
    </source>
</evidence>
<evidence type="ECO:0000269" key="6">
    <source>
    </source>
</evidence>
<gene>
    <name type="primary">AVPR2</name>
</gene>
<dbReference type="EMBL" id="X71795">
    <property type="protein sequence ID" value="CAA50678.1"/>
    <property type="molecule type" value="mRNA"/>
</dbReference>
<dbReference type="PIR" id="S34042">
    <property type="entry name" value="S34042"/>
</dbReference>
<dbReference type="RefSeq" id="NP_999397.1">
    <property type="nucleotide sequence ID" value="NM_214232.1"/>
</dbReference>
<dbReference type="SMR" id="P32307"/>
<dbReference type="FunCoup" id="P32307">
    <property type="interactions" value="206"/>
</dbReference>
<dbReference type="STRING" id="9823.ENSSSCP00000050870"/>
<dbReference type="BindingDB" id="P32307"/>
<dbReference type="ChEMBL" id="CHEMBL3944"/>
<dbReference type="DrugCentral" id="P32307"/>
<dbReference type="GlyCosmos" id="P32307">
    <property type="glycosylation" value="1 site, No reported glycans"/>
</dbReference>
<dbReference type="GlyGen" id="P32307">
    <property type="glycosylation" value="1 site"/>
</dbReference>
<dbReference type="PaxDb" id="9823-ENSSSCP00000013598"/>
<dbReference type="Ensembl" id="ENSSSCT00115003218">
    <property type="protein sequence ID" value="ENSSSCP00115002973"/>
    <property type="gene ID" value="ENSSSCG00115001903"/>
</dbReference>
<dbReference type="GeneID" id="397462"/>
<dbReference type="KEGG" id="ssc:397462"/>
<dbReference type="CTD" id="554"/>
<dbReference type="eggNOG" id="KOG3656">
    <property type="taxonomic scope" value="Eukaryota"/>
</dbReference>
<dbReference type="HOGENOM" id="CLU_009579_15_3_1"/>
<dbReference type="InParanoid" id="P32307"/>
<dbReference type="OrthoDB" id="5987909at2759"/>
<dbReference type="TreeFam" id="TF106499"/>
<dbReference type="PRO" id="PR:P32307"/>
<dbReference type="Proteomes" id="UP000008227">
    <property type="component" value="Unplaced"/>
</dbReference>
<dbReference type="Proteomes" id="UP000314985">
    <property type="component" value="Unplaced"/>
</dbReference>
<dbReference type="Proteomes" id="UP000694570">
    <property type="component" value="Unplaced"/>
</dbReference>
<dbReference type="Proteomes" id="UP000694571">
    <property type="component" value="Unplaced"/>
</dbReference>
<dbReference type="Proteomes" id="UP000694720">
    <property type="component" value="Unplaced"/>
</dbReference>
<dbReference type="Proteomes" id="UP000694722">
    <property type="component" value="Unplaced"/>
</dbReference>
<dbReference type="Proteomes" id="UP000694723">
    <property type="component" value="Unplaced"/>
</dbReference>
<dbReference type="Proteomes" id="UP000694724">
    <property type="component" value="Unplaced"/>
</dbReference>
<dbReference type="Proteomes" id="UP000694725">
    <property type="component" value="Unplaced"/>
</dbReference>
<dbReference type="Proteomes" id="UP000694726">
    <property type="component" value="Unplaced"/>
</dbReference>
<dbReference type="Proteomes" id="UP000694727">
    <property type="component" value="Unplaced"/>
</dbReference>
<dbReference type="Proteomes" id="UP000694728">
    <property type="component" value="Unplaced"/>
</dbReference>
<dbReference type="GO" id="GO:0005886">
    <property type="term" value="C:plasma membrane"/>
    <property type="evidence" value="ECO:0000318"/>
    <property type="project" value="GO_Central"/>
</dbReference>
<dbReference type="GO" id="GO:0005000">
    <property type="term" value="F:vasopressin receptor activity"/>
    <property type="evidence" value="ECO:0000318"/>
    <property type="project" value="GO_Central"/>
</dbReference>
<dbReference type="GO" id="GO:0032870">
    <property type="term" value="P:cellular response to hormone stimulus"/>
    <property type="evidence" value="ECO:0000318"/>
    <property type="project" value="GO_Central"/>
</dbReference>
<dbReference type="GO" id="GO:0007186">
    <property type="term" value="P:G protein-coupled receptor signaling pathway"/>
    <property type="evidence" value="ECO:0000318"/>
    <property type="project" value="GO_Central"/>
</dbReference>
<dbReference type="GO" id="GO:0010628">
    <property type="term" value="P:positive regulation of gene expression"/>
    <property type="evidence" value="ECO:0000250"/>
    <property type="project" value="UniProtKB"/>
</dbReference>
<dbReference type="GO" id="GO:0045907">
    <property type="term" value="P:positive regulation of vasoconstriction"/>
    <property type="evidence" value="ECO:0000318"/>
    <property type="project" value="GO_Central"/>
</dbReference>
<dbReference type="GO" id="GO:0001992">
    <property type="term" value="P:regulation of systemic arterial blood pressure by vasopressin"/>
    <property type="evidence" value="ECO:0000318"/>
    <property type="project" value="GO_Central"/>
</dbReference>
<dbReference type="CDD" id="cd15388">
    <property type="entry name" value="7tmA_V2R"/>
    <property type="match status" value="1"/>
</dbReference>
<dbReference type="FunFam" id="1.20.1070.10:FF:000190">
    <property type="entry name" value="Vasopressin V2 receptor"/>
    <property type="match status" value="1"/>
</dbReference>
<dbReference type="Gene3D" id="1.20.1070.10">
    <property type="entry name" value="Rhodopsin 7-helix transmembrane proteins"/>
    <property type="match status" value="1"/>
</dbReference>
<dbReference type="InterPro" id="IPR000276">
    <property type="entry name" value="GPCR_Rhodpsn"/>
</dbReference>
<dbReference type="InterPro" id="IPR017452">
    <property type="entry name" value="GPCR_Rhodpsn_7TM"/>
</dbReference>
<dbReference type="InterPro" id="IPR001817">
    <property type="entry name" value="Vasoprsn_rcpt"/>
</dbReference>
<dbReference type="InterPro" id="IPR000161">
    <property type="entry name" value="Vprsn_rcpt_V2"/>
</dbReference>
<dbReference type="PANTHER" id="PTHR24241">
    <property type="entry name" value="NEUROPEPTIDE RECEPTOR-RELATED G-PROTEIN COUPLED RECEPTOR"/>
    <property type="match status" value="1"/>
</dbReference>
<dbReference type="PANTHER" id="PTHR24241:SF20">
    <property type="entry name" value="VASOPRESSIN V2 RECEPTOR"/>
    <property type="match status" value="1"/>
</dbReference>
<dbReference type="Pfam" id="PF00001">
    <property type="entry name" value="7tm_1"/>
    <property type="match status" value="1"/>
</dbReference>
<dbReference type="PRINTS" id="PR00237">
    <property type="entry name" value="GPCRRHODOPSN"/>
</dbReference>
<dbReference type="PRINTS" id="PR00896">
    <property type="entry name" value="VASOPRESSINR"/>
</dbReference>
<dbReference type="PRINTS" id="PR00898">
    <property type="entry name" value="VASOPRSNV2R"/>
</dbReference>
<dbReference type="SUPFAM" id="SSF81321">
    <property type="entry name" value="Family A G protein-coupled receptor-like"/>
    <property type="match status" value="1"/>
</dbReference>
<dbReference type="PROSITE" id="PS00237">
    <property type="entry name" value="G_PROTEIN_RECEP_F1_1"/>
    <property type="match status" value="1"/>
</dbReference>
<dbReference type="PROSITE" id="PS50262">
    <property type="entry name" value="G_PROTEIN_RECEP_F1_2"/>
    <property type="match status" value="1"/>
</dbReference>
<comment type="function">
    <text evidence="2 6">Receptor for arginine vasopressin. The activity of this receptor is mediated by G proteins which activate adenylate cyclase (PubMed:8393786). Involved in renal water reabsorption (By similarity).</text>
</comment>
<comment type="subunit">
    <text evidence="2">Interacts with ARRDC4 (By similarity). Identified in a complex containing at least ARRDC4, V2R and HGS (By similarity). Interacts with TMEM147 (By similarity).</text>
</comment>
<comment type="subcellular location">
    <subcellularLocation>
        <location evidence="6">Cell membrane</location>
        <topology evidence="2">Multi-pass membrane protein</topology>
    </subcellularLocation>
</comment>
<comment type="similarity">
    <text evidence="4">Belongs to the G-protein coupled receptor 1 family. Vasopressin/oxytocin receptor subfamily.</text>
</comment>
<sequence>MLRATTSAVPRALSWPAAPGNGSEREPLDDRDPLLARVELALLSTVFVAVALSNGLVLGALVRRGRRGRWAPMHVFIGHLCLADLAVALFQVLPQLAWDATYRFRGPDALCRAVKYLQMVGMYASSYMILAMTLDRHRAICRPMLAYRHGGGARWNRPVLVAWAFSLLLSLPQLFIFAQRDVGDGSGVLDCWASFAEPWGLRAYVTWIALMVFVAPALGIAACQVLIFREIHTSLVPGPAERAGGHRGGRRAGSPREGARVSAAMAKTARMTLVIVAVYVLCWAPFFLVQLWSVWDPKAPREGPPFVLLMLLASLNSCTNPWIYASFSSSISSELRSLLCCPRRRTPPSLRPQEESCATASSFSARDTSS</sequence>
<protein>
    <recommendedName>
        <fullName>Vasopressin V2 receptor</fullName>
        <shortName>V2R</shortName>
    </recommendedName>
    <alternativeName>
        <fullName>AVPR V2</fullName>
    </alternativeName>
    <alternativeName>
        <fullName>Antidiuretic hormone receptor</fullName>
    </alternativeName>
    <alternativeName>
        <fullName>Renal-type arginine vasopressin receptor</fullName>
    </alternativeName>
</protein>
<accession>P32307</accession>